<gene>
    <name evidence="1" type="primary">rfcL</name>
    <name type="ordered locus">Maeo_1361</name>
</gene>
<feature type="chain" id="PRO_1000024484" description="Replication factor C large subunit">
    <location>
        <begin position="1"/>
        <end position="474"/>
    </location>
</feature>
<feature type="region of interest" description="Disordered" evidence="2">
    <location>
        <begin position="415"/>
        <end position="474"/>
    </location>
</feature>
<feature type="compositionally biased region" description="Basic and acidic residues" evidence="2">
    <location>
        <begin position="415"/>
        <end position="468"/>
    </location>
</feature>
<feature type="binding site" evidence="1">
    <location>
        <begin position="45"/>
        <end position="52"/>
    </location>
    <ligand>
        <name>ATP</name>
        <dbReference type="ChEBI" id="CHEBI:30616"/>
    </ligand>
</feature>
<sequence length="474" mass="54073">MNWVEKYRPKTMSEIVGNNKIKEELKNWIEEILHNEIPKPVLLVGPPGCGKTTLTNALANDYGFELIELNASDKRNKDIIRQIVGGASSSKSITGKRVLIVLDEVDGLSGNSDRGGVSEIIKIIKNAKNPIILTANDIYKPSLMSLRTVCNIVKIGSVHTNSIVPVLRRISLKEGFEVDDKILKIIAKHAGGDVRSAINDLESLAMGNTFDEDNVRELPDRDTDKSIFDAIRIIFKTTHYDISLEATRDLKEDIGTVQEWIAENVPREYKKGKEICLAYDNLSKADIFLGRVYKRQYYGLWRYASALMSAGVSLAKDEKYRGFFSYMRPTIFTKMSRSKGKRGAVNKVLEKISLKSHVSKRRAREDILYLEYILKNDAEMGAKLCEFYEFTKEDIEYLTNKTIAKKIIKLMKGDDKKTNNKKGKENKTKNTTKKIKEIKETPKKEEVKEPKKQIEKQKSEKKEPKKQMTLESFF</sequence>
<protein>
    <recommendedName>
        <fullName evidence="1">Replication factor C large subunit</fullName>
        <shortName evidence="1">RFC large subunit</shortName>
    </recommendedName>
    <alternativeName>
        <fullName evidence="1">Clamp loader large subunit</fullName>
    </alternativeName>
</protein>
<keyword id="KW-0067">ATP-binding</keyword>
<keyword id="KW-0235">DNA replication</keyword>
<keyword id="KW-0547">Nucleotide-binding</keyword>
<proteinExistence type="inferred from homology"/>
<name>RFCL_META3</name>
<reference key="1">
    <citation type="submission" date="2007-06" db="EMBL/GenBank/DDBJ databases">
        <title>Complete sequence of Methanococcus aeolicus Nankai-3.</title>
        <authorList>
            <consortium name="US DOE Joint Genome Institute"/>
            <person name="Copeland A."/>
            <person name="Lucas S."/>
            <person name="Lapidus A."/>
            <person name="Barry K."/>
            <person name="Glavina del Rio T."/>
            <person name="Dalin E."/>
            <person name="Tice H."/>
            <person name="Pitluck S."/>
            <person name="Chain P."/>
            <person name="Malfatti S."/>
            <person name="Shin M."/>
            <person name="Vergez L."/>
            <person name="Schmutz J."/>
            <person name="Larimer F."/>
            <person name="Land M."/>
            <person name="Hauser L."/>
            <person name="Kyrpides N."/>
            <person name="Lykidis A."/>
            <person name="Sieprawska-Lupa M."/>
            <person name="Whitman W.B."/>
            <person name="Richardson P."/>
        </authorList>
    </citation>
    <scope>NUCLEOTIDE SEQUENCE [LARGE SCALE GENOMIC DNA]</scope>
    <source>
        <strain>ATCC BAA-1280 / DSM 17508 / OCM 812 / Nankai-3</strain>
    </source>
</reference>
<organism>
    <name type="scientific">Methanococcus aeolicus (strain ATCC BAA-1280 / DSM 17508 / OCM 812 / Nankai-3)</name>
    <dbReference type="NCBI Taxonomy" id="419665"/>
    <lineage>
        <taxon>Archaea</taxon>
        <taxon>Methanobacteriati</taxon>
        <taxon>Methanobacteriota</taxon>
        <taxon>Methanomada group</taxon>
        <taxon>Methanococci</taxon>
        <taxon>Methanococcales</taxon>
        <taxon>Methanococcaceae</taxon>
        <taxon>Methanococcus</taxon>
    </lineage>
</organism>
<evidence type="ECO:0000255" key="1">
    <source>
        <dbReference type="HAMAP-Rule" id="MF_01508"/>
    </source>
</evidence>
<evidence type="ECO:0000256" key="2">
    <source>
        <dbReference type="SAM" id="MobiDB-lite"/>
    </source>
</evidence>
<dbReference type="EMBL" id="CP000743">
    <property type="protein sequence ID" value="ABR56937.1"/>
    <property type="molecule type" value="Genomic_DNA"/>
</dbReference>
<dbReference type="SMR" id="A6UWR5"/>
<dbReference type="STRING" id="419665.Maeo_1361"/>
<dbReference type="KEGG" id="mae:Maeo_1361"/>
<dbReference type="eggNOG" id="arCOG00470">
    <property type="taxonomic scope" value="Archaea"/>
</dbReference>
<dbReference type="HOGENOM" id="CLU_027255_1_0_2"/>
<dbReference type="OrthoDB" id="8658at2157"/>
<dbReference type="Proteomes" id="UP000001106">
    <property type="component" value="Chromosome"/>
</dbReference>
<dbReference type="GO" id="GO:0005524">
    <property type="term" value="F:ATP binding"/>
    <property type="evidence" value="ECO:0007669"/>
    <property type="project" value="UniProtKB-UniRule"/>
</dbReference>
<dbReference type="GO" id="GO:0016887">
    <property type="term" value="F:ATP hydrolysis activity"/>
    <property type="evidence" value="ECO:0007669"/>
    <property type="project" value="InterPro"/>
</dbReference>
<dbReference type="GO" id="GO:0003689">
    <property type="term" value="F:DNA clamp loader activity"/>
    <property type="evidence" value="ECO:0007669"/>
    <property type="project" value="UniProtKB-UniRule"/>
</dbReference>
<dbReference type="GO" id="GO:0006260">
    <property type="term" value="P:DNA replication"/>
    <property type="evidence" value="ECO:0007669"/>
    <property type="project" value="UniProtKB-UniRule"/>
</dbReference>
<dbReference type="CDD" id="cd00009">
    <property type="entry name" value="AAA"/>
    <property type="match status" value="1"/>
</dbReference>
<dbReference type="CDD" id="cd18140">
    <property type="entry name" value="HLD_clamp_RFC"/>
    <property type="match status" value="1"/>
</dbReference>
<dbReference type="Gene3D" id="1.10.8.60">
    <property type="match status" value="1"/>
</dbReference>
<dbReference type="Gene3D" id="3.40.50.300">
    <property type="entry name" value="P-loop containing nucleotide triphosphate hydrolases"/>
    <property type="match status" value="1"/>
</dbReference>
<dbReference type="HAMAP" id="MF_01508">
    <property type="entry name" value="RfcL"/>
    <property type="match status" value="1"/>
</dbReference>
<dbReference type="InterPro" id="IPR003593">
    <property type="entry name" value="AAA+_ATPase"/>
</dbReference>
<dbReference type="InterPro" id="IPR003959">
    <property type="entry name" value="ATPase_AAA_core"/>
</dbReference>
<dbReference type="InterPro" id="IPR027417">
    <property type="entry name" value="P-loop_NTPase"/>
</dbReference>
<dbReference type="InterPro" id="IPR023935">
    <property type="entry name" value="Rep_factor-C_lsu"/>
</dbReference>
<dbReference type="InterPro" id="IPR047854">
    <property type="entry name" value="RFC_lid"/>
</dbReference>
<dbReference type="NCBIfam" id="NF003229">
    <property type="entry name" value="PRK04195.1-5"/>
    <property type="match status" value="1"/>
</dbReference>
<dbReference type="NCBIfam" id="NF003230">
    <property type="entry name" value="PRK04195.1-6"/>
    <property type="match status" value="1"/>
</dbReference>
<dbReference type="PANTHER" id="PTHR23389">
    <property type="entry name" value="CHROMOSOME TRANSMISSION FIDELITY FACTOR 18"/>
    <property type="match status" value="1"/>
</dbReference>
<dbReference type="PANTHER" id="PTHR23389:SF6">
    <property type="entry name" value="REPLICATION FACTOR C SUBUNIT 1"/>
    <property type="match status" value="1"/>
</dbReference>
<dbReference type="Pfam" id="PF00004">
    <property type="entry name" value="AAA"/>
    <property type="match status" value="1"/>
</dbReference>
<dbReference type="Pfam" id="PF21960">
    <property type="entry name" value="RCF1-5-like_lid"/>
    <property type="match status" value="1"/>
</dbReference>
<dbReference type="SMART" id="SM00382">
    <property type="entry name" value="AAA"/>
    <property type="match status" value="1"/>
</dbReference>
<dbReference type="SUPFAM" id="SSF52540">
    <property type="entry name" value="P-loop containing nucleoside triphosphate hydrolases"/>
    <property type="match status" value="1"/>
</dbReference>
<comment type="function">
    <text evidence="1">Part of the RFC clamp loader complex which loads the PCNA sliding clamp onto DNA.</text>
</comment>
<comment type="subunit">
    <text evidence="1">Heteromultimer composed of small subunits (RfcS) and large subunits (RfcL).</text>
</comment>
<comment type="similarity">
    <text evidence="1">Belongs to the activator 1 small subunits family. RfcL subfamily.</text>
</comment>
<accession>A6UWR5</accession>